<proteinExistence type="inferred from homology"/>
<evidence type="ECO:0000255" key="1">
    <source>
        <dbReference type="HAMAP-Rule" id="MF_01345"/>
    </source>
</evidence>
<evidence type="ECO:0000305" key="2"/>
<dbReference type="EMBL" id="CP000605">
    <property type="protein sequence ID" value="ACD99161.1"/>
    <property type="molecule type" value="Genomic_DNA"/>
</dbReference>
<dbReference type="RefSeq" id="WP_007055338.1">
    <property type="nucleotide sequence ID" value="NZ_AABM02000025.1"/>
</dbReference>
<dbReference type="SMR" id="B3DQC3"/>
<dbReference type="GeneID" id="69578888"/>
<dbReference type="KEGG" id="blj:BLD_1716"/>
<dbReference type="HOGENOM" id="CLU_073626_1_0_11"/>
<dbReference type="Proteomes" id="UP000002419">
    <property type="component" value="Chromosome"/>
</dbReference>
<dbReference type="GO" id="GO:0022627">
    <property type="term" value="C:cytosolic small ribosomal subunit"/>
    <property type="evidence" value="ECO:0007669"/>
    <property type="project" value="TreeGrafter"/>
</dbReference>
<dbReference type="GO" id="GO:0019843">
    <property type="term" value="F:rRNA binding"/>
    <property type="evidence" value="ECO:0007669"/>
    <property type="project" value="UniProtKB-UniRule"/>
</dbReference>
<dbReference type="GO" id="GO:0003735">
    <property type="term" value="F:structural constituent of ribosome"/>
    <property type="evidence" value="ECO:0007669"/>
    <property type="project" value="InterPro"/>
</dbReference>
<dbReference type="GO" id="GO:0006412">
    <property type="term" value="P:translation"/>
    <property type="evidence" value="ECO:0007669"/>
    <property type="project" value="UniProtKB-UniRule"/>
</dbReference>
<dbReference type="CDD" id="cd00364">
    <property type="entry name" value="Ribosomal_uS17"/>
    <property type="match status" value="1"/>
</dbReference>
<dbReference type="Gene3D" id="2.40.50.140">
    <property type="entry name" value="Nucleic acid-binding proteins"/>
    <property type="match status" value="1"/>
</dbReference>
<dbReference type="HAMAP" id="MF_01345_B">
    <property type="entry name" value="Ribosomal_uS17_B"/>
    <property type="match status" value="1"/>
</dbReference>
<dbReference type="InterPro" id="IPR012340">
    <property type="entry name" value="NA-bd_OB-fold"/>
</dbReference>
<dbReference type="InterPro" id="IPR000266">
    <property type="entry name" value="Ribosomal_uS17"/>
</dbReference>
<dbReference type="InterPro" id="IPR019984">
    <property type="entry name" value="Ribosomal_uS17_bact/chlr"/>
</dbReference>
<dbReference type="InterPro" id="IPR019979">
    <property type="entry name" value="Ribosomal_uS17_CS"/>
</dbReference>
<dbReference type="NCBIfam" id="NF004123">
    <property type="entry name" value="PRK05610.1"/>
    <property type="match status" value="1"/>
</dbReference>
<dbReference type="NCBIfam" id="TIGR03635">
    <property type="entry name" value="uS17_bact"/>
    <property type="match status" value="1"/>
</dbReference>
<dbReference type="PANTHER" id="PTHR10744">
    <property type="entry name" value="40S RIBOSOMAL PROTEIN S11 FAMILY MEMBER"/>
    <property type="match status" value="1"/>
</dbReference>
<dbReference type="PANTHER" id="PTHR10744:SF1">
    <property type="entry name" value="SMALL RIBOSOMAL SUBUNIT PROTEIN US17M"/>
    <property type="match status" value="1"/>
</dbReference>
<dbReference type="Pfam" id="PF00366">
    <property type="entry name" value="Ribosomal_S17"/>
    <property type="match status" value="1"/>
</dbReference>
<dbReference type="PRINTS" id="PR00973">
    <property type="entry name" value="RIBOSOMALS17"/>
</dbReference>
<dbReference type="SUPFAM" id="SSF50249">
    <property type="entry name" value="Nucleic acid-binding proteins"/>
    <property type="match status" value="1"/>
</dbReference>
<dbReference type="PROSITE" id="PS00056">
    <property type="entry name" value="RIBOSOMAL_S17"/>
    <property type="match status" value="1"/>
</dbReference>
<name>RS17_BIFLD</name>
<sequence length="86" mass="10091">MAEERNFRKVRRGYVVSDKMDKTITVELEQRSTHPLYGKVVRSTSKVKAHDEHNDAHIGDLVSIMETRPLSKTKRWRLESIIERAK</sequence>
<gene>
    <name evidence="1" type="primary">rpsQ</name>
    <name type="ordered locus">BLD_1716</name>
</gene>
<feature type="chain" id="PRO_1000143223" description="Small ribosomal subunit protein uS17">
    <location>
        <begin position="1"/>
        <end position="86"/>
    </location>
</feature>
<accession>B3DQC3</accession>
<reference key="1">
    <citation type="journal article" date="2008" name="BMC Genomics">
        <title>Comparative genomic analysis of the gut bacterium Bifidobacterium longum reveals loci susceptible to deletion during pure culture growth.</title>
        <authorList>
            <person name="Lee J.H."/>
            <person name="Karamychev V.N."/>
            <person name="Kozyavkin S.A."/>
            <person name="Mills D."/>
            <person name="Pavlov A.R."/>
            <person name="Pavlova N.V."/>
            <person name="Polouchine N.N."/>
            <person name="Richardson P.M."/>
            <person name="Shakhova V.V."/>
            <person name="Slesarev A.I."/>
            <person name="Weimer B."/>
            <person name="O'Sullivan D.J."/>
        </authorList>
    </citation>
    <scope>NUCLEOTIDE SEQUENCE [LARGE SCALE GENOMIC DNA]</scope>
    <source>
        <strain>DJO10A</strain>
    </source>
</reference>
<organism>
    <name type="scientific">Bifidobacterium longum (strain DJO10A)</name>
    <dbReference type="NCBI Taxonomy" id="205913"/>
    <lineage>
        <taxon>Bacteria</taxon>
        <taxon>Bacillati</taxon>
        <taxon>Actinomycetota</taxon>
        <taxon>Actinomycetes</taxon>
        <taxon>Bifidobacteriales</taxon>
        <taxon>Bifidobacteriaceae</taxon>
        <taxon>Bifidobacterium</taxon>
    </lineage>
</organism>
<comment type="function">
    <text evidence="1">One of the primary rRNA binding proteins, it binds specifically to the 5'-end of 16S ribosomal RNA.</text>
</comment>
<comment type="subunit">
    <text evidence="1">Part of the 30S ribosomal subunit.</text>
</comment>
<comment type="similarity">
    <text evidence="1">Belongs to the universal ribosomal protein uS17 family.</text>
</comment>
<protein>
    <recommendedName>
        <fullName evidence="1">Small ribosomal subunit protein uS17</fullName>
    </recommendedName>
    <alternativeName>
        <fullName evidence="2">30S ribosomal protein S17</fullName>
    </alternativeName>
</protein>
<keyword id="KW-0687">Ribonucleoprotein</keyword>
<keyword id="KW-0689">Ribosomal protein</keyword>
<keyword id="KW-0694">RNA-binding</keyword>
<keyword id="KW-0699">rRNA-binding</keyword>